<organism>
    <name type="scientific">Brucella abortus biovar 1 (strain 9-941)</name>
    <dbReference type="NCBI Taxonomy" id="262698"/>
    <lineage>
        <taxon>Bacteria</taxon>
        <taxon>Pseudomonadati</taxon>
        <taxon>Pseudomonadota</taxon>
        <taxon>Alphaproteobacteria</taxon>
        <taxon>Hyphomicrobiales</taxon>
        <taxon>Brucellaceae</taxon>
        <taxon>Brucella/Ochrobactrum group</taxon>
        <taxon>Brucella</taxon>
    </lineage>
</organism>
<reference key="1">
    <citation type="journal article" date="2005" name="J. Bacteriol.">
        <title>Completion of the genome sequence of Brucella abortus and comparison to the highly similar genomes of Brucella melitensis and Brucella suis.</title>
        <authorList>
            <person name="Halling S.M."/>
            <person name="Peterson-Burch B.D."/>
            <person name="Bricker B.J."/>
            <person name="Zuerner R.L."/>
            <person name="Qing Z."/>
            <person name="Li L.-L."/>
            <person name="Kapur V."/>
            <person name="Alt D.P."/>
            <person name="Olsen S.C."/>
        </authorList>
    </citation>
    <scope>NUCLEOTIDE SEQUENCE [LARGE SCALE GENOMIC DNA]</scope>
    <source>
        <strain>9-941</strain>
    </source>
</reference>
<keyword id="KW-0067">ATP-binding</keyword>
<keyword id="KW-0963">Cytoplasm</keyword>
<keyword id="KW-0436">Ligase</keyword>
<keyword id="KW-0547">Nucleotide-binding</keyword>
<keyword id="KW-0658">Purine biosynthesis</keyword>
<gene>
    <name evidence="1" type="primary">purM</name>
    <name type="ordered locus">BruAb1_0729</name>
</gene>
<sequence length="359" mass="37447">MTMENKPAGQNGLTYAQAGVDIDAGNLMVEKIKPLVRSTRRPGADGEIGGFGGLFDLKAAGFKDPVLVAANDGVGTKLKIAIDADIHDTVGIDLVAMCVNDLVVQGAEPLFFLDYYATGKLSPDQGVAIVSGIAEGCRQAGCALIGGETAEMPGMYRDGDYDLAGFAVGAAERDRLLPRGDIAEGDIILGLASSGVHSNGFSLVRRIVELSGLGWKSQAPFQPGATLGEALLTPTRIYVKPLLAAIRACDGIKALAHITGGGFPDNIPRVLPKGLAAEIDLPAIAVPPVFSWLAKTGNVEPNEMLRTFNCGIGMIAVVNPAKVDEVIAALAAEGEKVVTLGRMTRREKDGVIYKGQLAL</sequence>
<evidence type="ECO:0000255" key="1">
    <source>
        <dbReference type="HAMAP-Rule" id="MF_00741"/>
    </source>
</evidence>
<protein>
    <recommendedName>
        <fullName evidence="1">Phosphoribosylformylglycinamidine cyclo-ligase</fullName>
        <ecNumber evidence="1">6.3.3.1</ecNumber>
    </recommendedName>
    <alternativeName>
        <fullName evidence="1">AIR synthase</fullName>
    </alternativeName>
    <alternativeName>
        <fullName evidence="1">AIRS</fullName>
    </alternativeName>
    <alternativeName>
        <fullName evidence="1">Phosphoribosyl-aminoimidazole synthetase</fullName>
    </alternativeName>
</protein>
<feature type="chain" id="PRO_0000258336" description="Phosphoribosylformylglycinamidine cyclo-ligase">
    <location>
        <begin position="1"/>
        <end position="359"/>
    </location>
</feature>
<name>PUR5_BRUAB</name>
<comment type="catalytic activity">
    <reaction evidence="1">
        <text>2-formamido-N(1)-(5-O-phospho-beta-D-ribosyl)acetamidine + ATP = 5-amino-1-(5-phospho-beta-D-ribosyl)imidazole + ADP + phosphate + H(+)</text>
        <dbReference type="Rhea" id="RHEA:23032"/>
        <dbReference type="ChEBI" id="CHEBI:15378"/>
        <dbReference type="ChEBI" id="CHEBI:30616"/>
        <dbReference type="ChEBI" id="CHEBI:43474"/>
        <dbReference type="ChEBI" id="CHEBI:137981"/>
        <dbReference type="ChEBI" id="CHEBI:147287"/>
        <dbReference type="ChEBI" id="CHEBI:456216"/>
        <dbReference type="EC" id="6.3.3.1"/>
    </reaction>
</comment>
<comment type="pathway">
    <text evidence="1">Purine metabolism; IMP biosynthesis via de novo pathway; 5-amino-1-(5-phospho-D-ribosyl)imidazole from N(2)-formyl-N(1)-(5-phospho-D-ribosyl)glycinamide: step 2/2.</text>
</comment>
<comment type="subcellular location">
    <subcellularLocation>
        <location evidence="1">Cytoplasm</location>
    </subcellularLocation>
</comment>
<comment type="similarity">
    <text evidence="1">Belongs to the AIR synthase family.</text>
</comment>
<accession>Q57E30</accession>
<proteinExistence type="inferred from homology"/>
<dbReference type="EC" id="6.3.3.1" evidence="1"/>
<dbReference type="EMBL" id="AE017223">
    <property type="protein sequence ID" value="AAX74104.1"/>
    <property type="molecule type" value="Genomic_DNA"/>
</dbReference>
<dbReference type="RefSeq" id="WP_002963853.1">
    <property type="nucleotide sequence ID" value="NC_006932.1"/>
</dbReference>
<dbReference type="SMR" id="Q57E30"/>
<dbReference type="EnsemblBacteria" id="AAX74104">
    <property type="protein sequence ID" value="AAX74104"/>
    <property type="gene ID" value="BruAb1_0729"/>
</dbReference>
<dbReference type="GeneID" id="93016888"/>
<dbReference type="KEGG" id="bmb:BruAb1_0729"/>
<dbReference type="HOGENOM" id="CLU_047116_0_0_5"/>
<dbReference type="UniPathway" id="UPA00074">
    <property type="reaction ID" value="UER00129"/>
</dbReference>
<dbReference type="PRO" id="PR:Q57E30"/>
<dbReference type="Proteomes" id="UP000000540">
    <property type="component" value="Chromosome I"/>
</dbReference>
<dbReference type="GO" id="GO:0005829">
    <property type="term" value="C:cytosol"/>
    <property type="evidence" value="ECO:0007669"/>
    <property type="project" value="TreeGrafter"/>
</dbReference>
<dbReference type="GO" id="GO:0005524">
    <property type="term" value="F:ATP binding"/>
    <property type="evidence" value="ECO:0007669"/>
    <property type="project" value="UniProtKB-KW"/>
</dbReference>
<dbReference type="GO" id="GO:0004637">
    <property type="term" value="F:phosphoribosylamine-glycine ligase activity"/>
    <property type="evidence" value="ECO:0007669"/>
    <property type="project" value="TreeGrafter"/>
</dbReference>
<dbReference type="GO" id="GO:0004641">
    <property type="term" value="F:phosphoribosylformylglycinamidine cyclo-ligase activity"/>
    <property type="evidence" value="ECO:0007669"/>
    <property type="project" value="UniProtKB-UniRule"/>
</dbReference>
<dbReference type="GO" id="GO:0006189">
    <property type="term" value="P:'de novo' IMP biosynthetic process"/>
    <property type="evidence" value="ECO:0007669"/>
    <property type="project" value="UniProtKB-UniRule"/>
</dbReference>
<dbReference type="GO" id="GO:0046084">
    <property type="term" value="P:adenine biosynthetic process"/>
    <property type="evidence" value="ECO:0007669"/>
    <property type="project" value="TreeGrafter"/>
</dbReference>
<dbReference type="CDD" id="cd02196">
    <property type="entry name" value="PurM"/>
    <property type="match status" value="1"/>
</dbReference>
<dbReference type="FunFam" id="3.30.1330.10:FF:000001">
    <property type="entry name" value="Phosphoribosylformylglycinamidine cyclo-ligase"/>
    <property type="match status" value="1"/>
</dbReference>
<dbReference type="FunFam" id="3.90.650.10:FF:000019">
    <property type="entry name" value="Trifunctional purine biosynthetic protein adenosine-3"/>
    <property type="match status" value="1"/>
</dbReference>
<dbReference type="Gene3D" id="3.90.650.10">
    <property type="entry name" value="PurM-like C-terminal domain"/>
    <property type="match status" value="1"/>
</dbReference>
<dbReference type="Gene3D" id="3.30.1330.10">
    <property type="entry name" value="PurM-like, N-terminal domain"/>
    <property type="match status" value="1"/>
</dbReference>
<dbReference type="HAMAP" id="MF_00741">
    <property type="entry name" value="AIRS"/>
    <property type="match status" value="1"/>
</dbReference>
<dbReference type="InterPro" id="IPR010918">
    <property type="entry name" value="PurM-like_C_dom"/>
</dbReference>
<dbReference type="InterPro" id="IPR036676">
    <property type="entry name" value="PurM-like_C_sf"/>
</dbReference>
<dbReference type="InterPro" id="IPR016188">
    <property type="entry name" value="PurM-like_N"/>
</dbReference>
<dbReference type="InterPro" id="IPR036921">
    <property type="entry name" value="PurM-like_N_sf"/>
</dbReference>
<dbReference type="InterPro" id="IPR004733">
    <property type="entry name" value="PurM_cligase"/>
</dbReference>
<dbReference type="NCBIfam" id="TIGR00878">
    <property type="entry name" value="purM"/>
    <property type="match status" value="1"/>
</dbReference>
<dbReference type="PANTHER" id="PTHR10520:SF12">
    <property type="entry name" value="TRIFUNCTIONAL PURINE BIOSYNTHETIC PROTEIN ADENOSINE-3"/>
    <property type="match status" value="1"/>
</dbReference>
<dbReference type="PANTHER" id="PTHR10520">
    <property type="entry name" value="TRIFUNCTIONAL PURINE BIOSYNTHETIC PROTEIN ADENOSINE-3-RELATED"/>
    <property type="match status" value="1"/>
</dbReference>
<dbReference type="Pfam" id="PF00586">
    <property type="entry name" value="AIRS"/>
    <property type="match status" value="1"/>
</dbReference>
<dbReference type="Pfam" id="PF02769">
    <property type="entry name" value="AIRS_C"/>
    <property type="match status" value="1"/>
</dbReference>
<dbReference type="SUPFAM" id="SSF56042">
    <property type="entry name" value="PurM C-terminal domain-like"/>
    <property type="match status" value="1"/>
</dbReference>
<dbReference type="SUPFAM" id="SSF55326">
    <property type="entry name" value="PurM N-terminal domain-like"/>
    <property type="match status" value="1"/>
</dbReference>